<dbReference type="EMBL" id="CP017628">
    <property type="protein sequence ID" value="AOW30045.1"/>
    <property type="molecule type" value="Genomic_DNA"/>
</dbReference>
<dbReference type="RefSeq" id="XP_714310.2">
    <property type="nucleotide sequence ID" value="XM_709217.2"/>
</dbReference>
<dbReference type="FunCoup" id="Q59WV0">
    <property type="interactions" value="11"/>
</dbReference>
<dbReference type="STRING" id="237561.Q59WV0"/>
<dbReference type="EnsemblFungi" id="C6_00990W_A-T">
    <property type="protein sequence ID" value="C6_00990W_A-T-p1"/>
    <property type="gene ID" value="C6_00990W_A"/>
</dbReference>
<dbReference type="GeneID" id="3644047"/>
<dbReference type="KEGG" id="cal:CAALFM_C600990WA"/>
<dbReference type="CGD" id="CAL0000199348">
    <property type="gene designation" value="RIM9"/>
</dbReference>
<dbReference type="VEuPathDB" id="FungiDB:C6_00990W_A"/>
<dbReference type="HOGENOM" id="CLU_828994_0_0_1"/>
<dbReference type="InParanoid" id="Q59WV0"/>
<dbReference type="OrthoDB" id="2354757at2759"/>
<dbReference type="PRO" id="PR:Q59WV0"/>
<dbReference type="Proteomes" id="UP000000559">
    <property type="component" value="Chromosome 6"/>
</dbReference>
<dbReference type="GO" id="GO:0032153">
    <property type="term" value="C:cell division site"/>
    <property type="evidence" value="ECO:0000318"/>
    <property type="project" value="GO_Central"/>
</dbReference>
<dbReference type="GO" id="GO:0035838">
    <property type="term" value="C:growing cell tip"/>
    <property type="evidence" value="ECO:0000318"/>
    <property type="project" value="GO_Central"/>
</dbReference>
<dbReference type="GO" id="GO:0005886">
    <property type="term" value="C:plasma membrane"/>
    <property type="evidence" value="ECO:0000318"/>
    <property type="project" value="GO_Central"/>
</dbReference>
<dbReference type="GO" id="GO:0071469">
    <property type="term" value="P:cellular response to alkaline pH"/>
    <property type="evidence" value="ECO:0000315"/>
    <property type="project" value="CGD"/>
</dbReference>
<dbReference type="GO" id="GO:0071285">
    <property type="term" value="P:cellular response to lithium ion"/>
    <property type="evidence" value="ECO:0000315"/>
    <property type="project" value="CGD"/>
</dbReference>
<dbReference type="GO" id="GO:0036244">
    <property type="term" value="P:cellular response to neutral pH"/>
    <property type="evidence" value="ECO:0000315"/>
    <property type="project" value="CGD"/>
</dbReference>
<dbReference type="GO" id="GO:0071467">
    <property type="term" value="P:cellular response to pH"/>
    <property type="evidence" value="ECO:0000315"/>
    <property type="project" value="CGD"/>
</dbReference>
<dbReference type="GO" id="GO:0009267">
    <property type="term" value="P:cellular response to starvation"/>
    <property type="evidence" value="ECO:0000315"/>
    <property type="project" value="CGD"/>
</dbReference>
<dbReference type="GO" id="GO:0030447">
    <property type="term" value="P:filamentous growth"/>
    <property type="evidence" value="ECO:0000315"/>
    <property type="project" value="CGD"/>
</dbReference>
<dbReference type="GO" id="GO:0036178">
    <property type="term" value="P:filamentous growth of a population of unicellular organisms in response to neutral pH"/>
    <property type="evidence" value="ECO:0000315"/>
    <property type="project" value="CGD"/>
</dbReference>
<dbReference type="GO" id="GO:0036177">
    <property type="term" value="P:filamentous growth of a population of unicellular organisms in response to pH"/>
    <property type="evidence" value="ECO:0000315"/>
    <property type="project" value="CGD"/>
</dbReference>
<dbReference type="GO" id="GO:0036170">
    <property type="term" value="P:filamentous growth of a population of unicellular organisms in response to starvation"/>
    <property type="evidence" value="ECO:0000315"/>
    <property type="project" value="CGD"/>
</dbReference>
<dbReference type="InterPro" id="IPR051380">
    <property type="entry name" value="pH-response_reg_palI/RIM9"/>
</dbReference>
<dbReference type="InterPro" id="IPR009571">
    <property type="entry name" value="SUR7/Rim9-like_fungi"/>
</dbReference>
<dbReference type="PANTHER" id="PTHR28013">
    <property type="entry name" value="PROTEIN DCV1-RELATED"/>
    <property type="match status" value="1"/>
</dbReference>
<dbReference type="PANTHER" id="PTHR28013:SF3">
    <property type="entry name" value="PROTEIN DCV1-RELATED"/>
    <property type="match status" value="1"/>
</dbReference>
<dbReference type="Pfam" id="PF06687">
    <property type="entry name" value="SUR7"/>
    <property type="match status" value="1"/>
</dbReference>
<reference key="1">
    <citation type="journal article" date="2004" name="Proc. Natl. Acad. Sci. U.S.A.">
        <title>The diploid genome sequence of Candida albicans.</title>
        <authorList>
            <person name="Jones T."/>
            <person name="Federspiel N.A."/>
            <person name="Chibana H."/>
            <person name="Dungan J."/>
            <person name="Kalman S."/>
            <person name="Magee B.B."/>
            <person name="Newport G."/>
            <person name="Thorstenson Y.R."/>
            <person name="Agabian N."/>
            <person name="Magee P.T."/>
            <person name="Davis R.W."/>
            <person name="Scherer S."/>
        </authorList>
    </citation>
    <scope>NUCLEOTIDE SEQUENCE [LARGE SCALE GENOMIC DNA]</scope>
    <source>
        <strain>SC5314 / ATCC MYA-2876</strain>
    </source>
</reference>
<reference key="2">
    <citation type="journal article" date="2007" name="Genome Biol.">
        <title>Assembly of the Candida albicans genome into sixteen supercontigs aligned on the eight chromosomes.</title>
        <authorList>
            <person name="van het Hoog M."/>
            <person name="Rast T.J."/>
            <person name="Martchenko M."/>
            <person name="Grindle S."/>
            <person name="Dignard D."/>
            <person name="Hogues H."/>
            <person name="Cuomo C."/>
            <person name="Berriman M."/>
            <person name="Scherer S."/>
            <person name="Magee B.B."/>
            <person name="Whiteway M."/>
            <person name="Chibana H."/>
            <person name="Nantel A."/>
            <person name="Magee P.T."/>
        </authorList>
    </citation>
    <scope>GENOME REANNOTATION</scope>
    <source>
        <strain>SC5314 / ATCC MYA-2876</strain>
    </source>
</reference>
<reference key="3">
    <citation type="journal article" date="2013" name="Genome Biol.">
        <title>Assembly of a phased diploid Candida albicans genome facilitates allele-specific measurements and provides a simple model for repeat and indel structure.</title>
        <authorList>
            <person name="Muzzey D."/>
            <person name="Schwartz K."/>
            <person name="Weissman J.S."/>
            <person name="Sherlock G."/>
        </authorList>
    </citation>
    <scope>NUCLEOTIDE SEQUENCE [LARGE SCALE GENOMIC DNA]</scope>
    <scope>GENOME REANNOTATION</scope>
    <source>
        <strain>SC5314 / ATCC MYA-2876</strain>
    </source>
</reference>
<sequence>MFKAFIALLILLIVCWVIQLLPVIAVPFTTPDANIYLSYYNNYKFGVFGICNVERHICSKPSIGYPSTNSTFYAYDNDESFGTGGIVLPSDVRYTISKLLVVHVVAFCFSSLLLIVIFGLIIILFFKYIKTKKDLEGIQLNDSSHEITIHSDEEDNNNNNIDNTNHNNKRASVTINKTIFDLTPFLNLMLVFTFFSVLTTLLAFLADILLFTPNLSYLGWLQLIPIVSMALVTSMLCFIKRSISSRKFFESEYRYANDDMRIMRKTYVDEFWNDNASDDGFYVYTDGFYTRNGDNVQQPTSNTAGSLLSEHHDVSIVEPRTFLDTDDSRRGSSPHEFIELQNLRPV</sequence>
<proteinExistence type="inferred from homology"/>
<name>PALI_CANAL</name>
<accession>Q59WV0</accession>
<accession>A0A1D8PPI0</accession>
<accession>Q59XQ5</accession>
<protein>
    <recommendedName>
        <fullName>pH-response regulator protein palI/RIM9</fullName>
    </recommendedName>
</protein>
<feature type="chain" id="PRO_0000058209" description="pH-response regulator protein palI/RIM9">
    <location>
        <begin position="1"/>
        <end position="346"/>
    </location>
</feature>
<feature type="topological domain" description="Cytoplasmic" evidence="2">
    <location>
        <begin position="1"/>
        <end position="3"/>
    </location>
</feature>
<feature type="transmembrane region" description="Helical" evidence="2">
    <location>
        <begin position="4"/>
        <end position="24"/>
    </location>
</feature>
<feature type="topological domain" description="Extracellular" evidence="2">
    <location>
        <begin position="25"/>
        <end position="105"/>
    </location>
</feature>
<feature type="transmembrane region" description="Helical" evidence="2">
    <location>
        <begin position="106"/>
        <end position="126"/>
    </location>
</feature>
<feature type="topological domain" description="Cytoplasmic" evidence="2">
    <location>
        <begin position="127"/>
        <end position="190"/>
    </location>
</feature>
<feature type="transmembrane region" description="Helical" evidence="2">
    <location>
        <begin position="191"/>
        <end position="211"/>
    </location>
</feature>
<feature type="topological domain" description="Extracellular" evidence="2">
    <location>
        <begin position="212"/>
        <end position="218"/>
    </location>
</feature>
<feature type="transmembrane region" description="Helical" evidence="2">
    <location>
        <begin position="219"/>
        <end position="239"/>
    </location>
</feature>
<feature type="topological domain" description="Cytoplasmic" evidence="2">
    <location>
        <begin position="240"/>
        <end position="346"/>
    </location>
</feature>
<gene>
    <name type="primary">RIM9</name>
    <name type="ordered locus">CAALFM_C600990WA</name>
    <name type="ORF">CaO19.101</name>
    <name type="ORF">CaO19.7748</name>
</gene>
<evidence type="ECO:0000250" key="1"/>
<evidence type="ECO:0000255" key="2"/>
<evidence type="ECO:0000305" key="3"/>
<organism>
    <name type="scientific">Candida albicans (strain SC5314 / ATCC MYA-2876)</name>
    <name type="common">Yeast</name>
    <dbReference type="NCBI Taxonomy" id="237561"/>
    <lineage>
        <taxon>Eukaryota</taxon>
        <taxon>Fungi</taxon>
        <taxon>Dikarya</taxon>
        <taxon>Ascomycota</taxon>
        <taxon>Saccharomycotina</taxon>
        <taxon>Pichiomycetes</taxon>
        <taxon>Debaryomycetaceae</taxon>
        <taxon>Candida/Lodderomyces clade</taxon>
        <taxon>Candida</taxon>
    </lineage>
</organism>
<comment type="function">
    <text evidence="1">Required for the proteolytic cleavage of the transcription factor RIM101 in response to alkaline ambient pH.</text>
</comment>
<comment type="subcellular location">
    <subcellularLocation>
        <location evidence="3">Membrane</location>
        <topology evidence="3">Multi-pass membrane protein</topology>
    </subcellularLocation>
</comment>
<comment type="similarity">
    <text evidence="3">Belongs to the palI/RIM9 family.</text>
</comment>
<keyword id="KW-0472">Membrane</keyword>
<keyword id="KW-1185">Reference proteome</keyword>
<keyword id="KW-0812">Transmembrane</keyword>
<keyword id="KW-1133">Transmembrane helix</keyword>